<dbReference type="EMBL" id="AK029981">
    <property type="protein sequence ID" value="BAC26715.1"/>
    <property type="molecule type" value="mRNA"/>
</dbReference>
<dbReference type="EMBL" id="BC141026">
    <property type="protein sequence ID" value="AAI41027.1"/>
    <property type="molecule type" value="mRNA"/>
</dbReference>
<dbReference type="EMBL" id="BC145170">
    <property type="protein sequence ID" value="AAI45171.1"/>
    <property type="molecule type" value="mRNA"/>
</dbReference>
<dbReference type="CCDS" id="CCDS19068.1"/>
<dbReference type="RefSeq" id="NP_766467.2">
    <property type="nucleotide sequence ID" value="NM_172879.3"/>
</dbReference>
<dbReference type="SMR" id="Q8C0R9"/>
<dbReference type="FunCoup" id="Q8C0R9">
    <property type="interactions" value="272"/>
</dbReference>
<dbReference type="STRING" id="10090.ENSMUSP00000038675"/>
<dbReference type="iPTMnet" id="Q8C0R9"/>
<dbReference type="PhosphoSitePlus" id="Q8C0R9"/>
<dbReference type="PaxDb" id="10090-ENSMUSP00000038675"/>
<dbReference type="PeptideAtlas" id="Q8C0R9"/>
<dbReference type="ProteomicsDB" id="292116"/>
<dbReference type="Antibodypedia" id="58070">
    <property type="antibodies" value="3 antibodies from 3 providers"/>
</dbReference>
<dbReference type="DNASU" id="242838"/>
<dbReference type="Ensembl" id="ENSMUST00000044039.2">
    <property type="protein sequence ID" value="ENSMUSP00000038675.2"/>
    <property type="gene ID" value="ENSMUSG00000040367.3"/>
</dbReference>
<dbReference type="GeneID" id="242838"/>
<dbReference type="KEGG" id="mmu:242838"/>
<dbReference type="UCSC" id="uc008whx.2">
    <property type="organism name" value="mouse"/>
</dbReference>
<dbReference type="AGR" id="MGI:3045299"/>
<dbReference type="CTD" id="401387"/>
<dbReference type="MGI" id="MGI:3045299">
    <property type="gene designation" value="Lrrd1"/>
</dbReference>
<dbReference type="VEuPathDB" id="HostDB:ENSMUSG00000040367"/>
<dbReference type="eggNOG" id="KOG0619">
    <property type="taxonomic scope" value="Eukaryota"/>
</dbReference>
<dbReference type="GeneTree" id="ENSGT00940000161427"/>
<dbReference type="HOGENOM" id="CLU_022747_0_0_1"/>
<dbReference type="InParanoid" id="Q8C0R9"/>
<dbReference type="OMA" id="QFPVGLC"/>
<dbReference type="OrthoDB" id="1055148at2759"/>
<dbReference type="PhylomeDB" id="Q8C0R9"/>
<dbReference type="TreeFam" id="TF351429"/>
<dbReference type="BioGRID-ORCS" id="242838">
    <property type="hits" value="1 hit in 77 CRISPR screens"/>
</dbReference>
<dbReference type="PRO" id="PR:Q8C0R9"/>
<dbReference type="Proteomes" id="UP000000589">
    <property type="component" value="Chromosome 5"/>
</dbReference>
<dbReference type="RNAct" id="Q8C0R9">
    <property type="molecule type" value="protein"/>
</dbReference>
<dbReference type="Bgee" id="ENSMUSG00000040367">
    <property type="expression patterns" value="Expressed in spermatid and 10 other cell types or tissues"/>
</dbReference>
<dbReference type="ExpressionAtlas" id="Q8C0R9">
    <property type="expression patterns" value="baseline and differential"/>
</dbReference>
<dbReference type="FunFam" id="3.80.10.10:FF:000689">
    <property type="entry name" value="Leucine rich repeats and death domain containing 1"/>
    <property type="match status" value="1"/>
</dbReference>
<dbReference type="FunFam" id="3.80.10.10:FF:000307">
    <property type="entry name" value="Leucine-rich repeats and death domain-containing 1"/>
    <property type="match status" value="2"/>
</dbReference>
<dbReference type="Gene3D" id="3.80.10.10">
    <property type="entry name" value="Ribonuclease Inhibitor"/>
    <property type="match status" value="6"/>
</dbReference>
<dbReference type="InterPro" id="IPR056869">
    <property type="entry name" value="DD_LRRD1"/>
</dbReference>
<dbReference type="InterPro" id="IPR001611">
    <property type="entry name" value="Leu-rich_rpt"/>
</dbReference>
<dbReference type="InterPro" id="IPR003591">
    <property type="entry name" value="Leu-rich_rpt_typical-subtyp"/>
</dbReference>
<dbReference type="InterPro" id="IPR032675">
    <property type="entry name" value="LRR_dom_sf"/>
</dbReference>
<dbReference type="InterPro" id="IPR050216">
    <property type="entry name" value="LRR_domain-containing"/>
</dbReference>
<dbReference type="InterPro" id="IPR055414">
    <property type="entry name" value="LRR_R13L4/SHOC2-like"/>
</dbReference>
<dbReference type="PANTHER" id="PTHR48051">
    <property type="match status" value="1"/>
</dbReference>
<dbReference type="PANTHER" id="PTHR48051:SF1">
    <property type="entry name" value="RAS SUPPRESSOR PROTEIN 1"/>
    <property type="match status" value="1"/>
</dbReference>
<dbReference type="Pfam" id="PF24978">
    <property type="entry name" value="Death_Lrrd1"/>
    <property type="match status" value="1"/>
</dbReference>
<dbReference type="Pfam" id="PF23598">
    <property type="entry name" value="LRR_14"/>
    <property type="match status" value="2"/>
</dbReference>
<dbReference type="Pfam" id="PF13855">
    <property type="entry name" value="LRR_8"/>
    <property type="match status" value="2"/>
</dbReference>
<dbReference type="SMART" id="SM00364">
    <property type="entry name" value="LRR_BAC"/>
    <property type="match status" value="10"/>
</dbReference>
<dbReference type="SMART" id="SM00365">
    <property type="entry name" value="LRR_SD22"/>
    <property type="match status" value="11"/>
</dbReference>
<dbReference type="SMART" id="SM00369">
    <property type="entry name" value="LRR_TYP"/>
    <property type="match status" value="19"/>
</dbReference>
<dbReference type="SUPFAM" id="SSF52058">
    <property type="entry name" value="L domain-like"/>
    <property type="match status" value="2"/>
</dbReference>
<dbReference type="PROSITE" id="PS51450">
    <property type="entry name" value="LRR"/>
    <property type="match status" value="22"/>
</dbReference>
<name>LRRD1_MOUSE</name>
<feature type="chain" id="PRO_0000325806" description="Leucine-rich repeat and death domain-containing protein 1">
    <location>
        <begin position="1"/>
        <end position="853"/>
    </location>
</feature>
<feature type="repeat" description="LRR 1">
    <location>
        <begin position="133"/>
        <end position="157"/>
    </location>
</feature>
<feature type="repeat" description="LRR 2">
    <location>
        <begin position="159"/>
        <end position="180"/>
    </location>
</feature>
<feature type="repeat" description="LRR 3">
    <location>
        <begin position="183"/>
        <end position="204"/>
    </location>
</feature>
<feature type="repeat" description="LRR 4">
    <location>
        <begin position="206"/>
        <end position="227"/>
    </location>
</feature>
<feature type="repeat" description="LRR 5">
    <location>
        <begin position="229"/>
        <end position="251"/>
    </location>
</feature>
<feature type="repeat" description="LRR 6">
    <location>
        <begin position="252"/>
        <end position="274"/>
    </location>
</feature>
<feature type="repeat" description="LRR 7">
    <location>
        <begin position="275"/>
        <end position="297"/>
    </location>
</feature>
<feature type="repeat" description="LRR 8">
    <location>
        <begin position="298"/>
        <end position="319"/>
    </location>
</feature>
<feature type="repeat" description="LRR 9">
    <location>
        <begin position="321"/>
        <end position="342"/>
    </location>
</feature>
<feature type="repeat" description="LRR 10">
    <location>
        <begin position="344"/>
        <end position="365"/>
    </location>
</feature>
<feature type="repeat" description="LRR 11">
    <location>
        <begin position="367"/>
        <end position="388"/>
    </location>
</feature>
<feature type="repeat" description="LRR 12">
    <location>
        <begin position="390"/>
        <end position="411"/>
    </location>
</feature>
<feature type="repeat" description="LRR 13">
    <location>
        <begin position="413"/>
        <end position="435"/>
    </location>
</feature>
<feature type="repeat" description="LRR 14">
    <location>
        <begin position="436"/>
        <end position="457"/>
    </location>
</feature>
<feature type="repeat" description="LRR 15">
    <location>
        <begin position="459"/>
        <end position="481"/>
    </location>
</feature>
<feature type="repeat" description="LRR 16">
    <location>
        <begin position="482"/>
        <end position="503"/>
    </location>
</feature>
<feature type="repeat" description="LRR 17">
    <location>
        <begin position="505"/>
        <end position="527"/>
    </location>
</feature>
<feature type="repeat" description="LRR 18">
    <location>
        <begin position="528"/>
        <end position="549"/>
    </location>
</feature>
<feature type="repeat" description="LRR 19">
    <location>
        <begin position="551"/>
        <end position="573"/>
    </location>
</feature>
<feature type="repeat" description="LRR 20">
    <location>
        <begin position="574"/>
        <end position="596"/>
    </location>
</feature>
<feature type="repeat" description="LRR 21">
    <location>
        <begin position="597"/>
        <end position="618"/>
    </location>
</feature>
<feature type="repeat" description="LRR 22">
    <location>
        <begin position="620"/>
        <end position="641"/>
    </location>
</feature>
<feature type="repeat" description="LRR 23">
    <location>
        <begin position="646"/>
        <end position="668"/>
    </location>
</feature>
<feature type="repeat" description="LRR 24">
    <location>
        <begin position="669"/>
        <end position="690"/>
    </location>
</feature>
<feature type="repeat" description="LRR 25">
    <location>
        <begin position="692"/>
        <end position="713"/>
    </location>
</feature>
<feature type="repeat" description="LRR 26">
    <location>
        <begin position="715"/>
        <end position="736"/>
    </location>
</feature>
<feature type="domain" description="Death">
    <location>
        <begin position="757"/>
        <end position="845"/>
    </location>
</feature>
<feature type="region of interest" description="Disordered" evidence="1">
    <location>
        <begin position="1"/>
        <end position="78"/>
    </location>
</feature>
<feature type="compositionally biased region" description="Acidic residues" evidence="1">
    <location>
        <begin position="19"/>
        <end position="31"/>
    </location>
</feature>
<feature type="compositionally biased region" description="Polar residues" evidence="1">
    <location>
        <begin position="56"/>
        <end position="65"/>
    </location>
</feature>
<feature type="sequence conflict" description="In Ref. 1; BAC26715." evidence="2" ref="1">
    <original>N</original>
    <variation>H</variation>
    <location>
        <position position="602"/>
    </location>
</feature>
<feature type="sequence conflict" description="In Ref. 1; BAC26715." evidence="2" ref="1">
    <original>L</original>
    <variation>R</variation>
    <location>
        <position position="618"/>
    </location>
</feature>
<feature type="sequence conflict" description="In Ref. 1; BAC26715." evidence="2" ref="1">
    <original>L</original>
    <variation>V</variation>
    <location>
        <position position="634"/>
    </location>
</feature>
<organism>
    <name type="scientific">Mus musculus</name>
    <name type="common">Mouse</name>
    <dbReference type="NCBI Taxonomy" id="10090"/>
    <lineage>
        <taxon>Eukaryota</taxon>
        <taxon>Metazoa</taxon>
        <taxon>Chordata</taxon>
        <taxon>Craniata</taxon>
        <taxon>Vertebrata</taxon>
        <taxon>Euteleostomi</taxon>
        <taxon>Mammalia</taxon>
        <taxon>Eutheria</taxon>
        <taxon>Euarchontoglires</taxon>
        <taxon>Glires</taxon>
        <taxon>Rodentia</taxon>
        <taxon>Myomorpha</taxon>
        <taxon>Muroidea</taxon>
        <taxon>Muridae</taxon>
        <taxon>Murinae</taxon>
        <taxon>Mus</taxon>
        <taxon>Mus</taxon>
    </lineage>
</organism>
<sequence length="853" mass="97132">MSEDGSNVEPGGFPRFESLEEPGSEISDLLDEASPYSKSKDSNQIYEANPSKDTEQSAASFTSQLDRNEEKNTGIPFSETNIADIIPLSIEESLQSSGSSETKMAEDYYPVKFPTGRKFRGRIFNGNQKGLDMKSDNFTVNLDAKGLQEFPVDIVKVKYVKYLYLDKNQIKNFQGIDPGDLLGLEILSLQENGLSSIPLEIQLFHNLKILNASYNEISQIPKELLQLENMRQLLLNSNHIDTLPSGLEHLRYLETLSLGKNMLTYIPDSLSSLKNLRILNLEYNQLTIFSKSLCFLPKLNSLNLTGNMIGSLPKEVRELKNLESLLMDHNKLTFLAVEIFQLPKIKELHLADNKLEAISPKIENFKELRLLNLDKNLLQSIPKKISHCVNLESLSLSDNNIEELPKKIRKLKNLRQLHVNRNKMITMTEEISHLSNIHILEFSGNQITHVPIEIKNCRKITRVELNYNNIMYFPVGLCALQSLDYLSFNGNYISEIPVDMSFSKQLLHLELNRNKLTVFSKHLCSLTNLEYLDLAKNQIMTIPSCISAMVSLHVLILSDNKFESFPKELCSLKNLRVLDISENKLQKIPLEISKLKRIQKLNLSNNIFTNFPVELCQLQTLEELNISQTSGKKLTRLPEEVSHMTQLKILNISNNAIKDIPKNIGELRSLVSFYASNNQISSLPSSFLSLEVLQSLDLRGNNMTALPSGIYKLSSLKEINFDDNPLMRPPMEICKGKEMHMITCYLQRADERDEKILEKIFNIVANSITETNFEFLQQKLNMASSANNMPVRPTTPLNERIYQALIKWKAEKDVQFTATALRDKLFRALNMIGAYDIMDKITALNLYTSAIKL</sequence>
<gene>
    <name type="primary">Lrrd1</name>
</gene>
<evidence type="ECO:0000256" key="1">
    <source>
        <dbReference type="SAM" id="MobiDB-lite"/>
    </source>
</evidence>
<evidence type="ECO:0000305" key="2"/>
<proteinExistence type="evidence at transcript level"/>
<keyword id="KW-0433">Leucine-rich repeat</keyword>
<keyword id="KW-1185">Reference proteome</keyword>
<keyword id="KW-0677">Repeat</keyword>
<accession>Q8C0R9</accession>
<accession>B2RU96</accession>
<protein>
    <recommendedName>
        <fullName>Leucine-rich repeat and death domain-containing protein 1</fullName>
    </recommendedName>
</protein>
<reference key="1">
    <citation type="journal article" date="2005" name="Science">
        <title>The transcriptional landscape of the mammalian genome.</title>
        <authorList>
            <person name="Carninci P."/>
            <person name="Kasukawa T."/>
            <person name="Katayama S."/>
            <person name="Gough J."/>
            <person name="Frith M.C."/>
            <person name="Maeda N."/>
            <person name="Oyama R."/>
            <person name="Ravasi T."/>
            <person name="Lenhard B."/>
            <person name="Wells C."/>
            <person name="Kodzius R."/>
            <person name="Shimokawa K."/>
            <person name="Bajic V.B."/>
            <person name="Brenner S.E."/>
            <person name="Batalov S."/>
            <person name="Forrest A.R."/>
            <person name="Zavolan M."/>
            <person name="Davis M.J."/>
            <person name="Wilming L.G."/>
            <person name="Aidinis V."/>
            <person name="Allen J.E."/>
            <person name="Ambesi-Impiombato A."/>
            <person name="Apweiler R."/>
            <person name="Aturaliya R.N."/>
            <person name="Bailey T.L."/>
            <person name="Bansal M."/>
            <person name="Baxter L."/>
            <person name="Beisel K.W."/>
            <person name="Bersano T."/>
            <person name="Bono H."/>
            <person name="Chalk A.M."/>
            <person name="Chiu K.P."/>
            <person name="Choudhary V."/>
            <person name="Christoffels A."/>
            <person name="Clutterbuck D.R."/>
            <person name="Crowe M.L."/>
            <person name="Dalla E."/>
            <person name="Dalrymple B.P."/>
            <person name="de Bono B."/>
            <person name="Della Gatta G."/>
            <person name="di Bernardo D."/>
            <person name="Down T."/>
            <person name="Engstrom P."/>
            <person name="Fagiolini M."/>
            <person name="Faulkner G."/>
            <person name="Fletcher C.F."/>
            <person name="Fukushima T."/>
            <person name="Furuno M."/>
            <person name="Futaki S."/>
            <person name="Gariboldi M."/>
            <person name="Georgii-Hemming P."/>
            <person name="Gingeras T.R."/>
            <person name="Gojobori T."/>
            <person name="Green R.E."/>
            <person name="Gustincich S."/>
            <person name="Harbers M."/>
            <person name="Hayashi Y."/>
            <person name="Hensch T.K."/>
            <person name="Hirokawa N."/>
            <person name="Hill D."/>
            <person name="Huminiecki L."/>
            <person name="Iacono M."/>
            <person name="Ikeo K."/>
            <person name="Iwama A."/>
            <person name="Ishikawa T."/>
            <person name="Jakt M."/>
            <person name="Kanapin A."/>
            <person name="Katoh M."/>
            <person name="Kawasawa Y."/>
            <person name="Kelso J."/>
            <person name="Kitamura H."/>
            <person name="Kitano H."/>
            <person name="Kollias G."/>
            <person name="Krishnan S.P."/>
            <person name="Kruger A."/>
            <person name="Kummerfeld S.K."/>
            <person name="Kurochkin I.V."/>
            <person name="Lareau L.F."/>
            <person name="Lazarevic D."/>
            <person name="Lipovich L."/>
            <person name="Liu J."/>
            <person name="Liuni S."/>
            <person name="McWilliam S."/>
            <person name="Madan Babu M."/>
            <person name="Madera M."/>
            <person name="Marchionni L."/>
            <person name="Matsuda H."/>
            <person name="Matsuzawa S."/>
            <person name="Miki H."/>
            <person name="Mignone F."/>
            <person name="Miyake S."/>
            <person name="Morris K."/>
            <person name="Mottagui-Tabar S."/>
            <person name="Mulder N."/>
            <person name="Nakano N."/>
            <person name="Nakauchi H."/>
            <person name="Ng P."/>
            <person name="Nilsson R."/>
            <person name="Nishiguchi S."/>
            <person name="Nishikawa S."/>
            <person name="Nori F."/>
            <person name="Ohara O."/>
            <person name="Okazaki Y."/>
            <person name="Orlando V."/>
            <person name="Pang K.C."/>
            <person name="Pavan W.J."/>
            <person name="Pavesi G."/>
            <person name="Pesole G."/>
            <person name="Petrovsky N."/>
            <person name="Piazza S."/>
            <person name="Reed J."/>
            <person name="Reid J.F."/>
            <person name="Ring B.Z."/>
            <person name="Ringwald M."/>
            <person name="Rost B."/>
            <person name="Ruan Y."/>
            <person name="Salzberg S.L."/>
            <person name="Sandelin A."/>
            <person name="Schneider C."/>
            <person name="Schoenbach C."/>
            <person name="Sekiguchi K."/>
            <person name="Semple C.A."/>
            <person name="Seno S."/>
            <person name="Sessa L."/>
            <person name="Sheng Y."/>
            <person name="Shibata Y."/>
            <person name="Shimada H."/>
            <person name="Shimada K."/>
            <person name="Silva D."/>
            <person name="Sinclair B."/>
            <person name="Sperling S."/>
            <person name="Stupka E."/>
            <person name="Sugiura K."/>
            <person name="Sultana R."/>
            <person name="Takenaka Y."/>
            <person name="Taki K."/>
            <person name="Tammoja K."/>
            <person name="Tan S.L."/>
            <person name="Tang S."/>
            <person name="Taylor M.S."/>
            <person name="Tegner J."/>
            <person name="Teichmann S.A."/>
            <person name="Ueda H.R."/>
            <person name="van Nimwegen E."/>
            <person name="Verardo R."/>
            <person name="Wei C.L."/>
            <person name="Yagi K."/>
            <person name="Yamanishi H."/>
            <person name="Zabarovsky E."/>
            <person name="Zhu S."/>
            <person name="Zimmer A."/>
            <person name="Hide W."/>
            <person name="Bult C."/>
            <person name="Grimmond S.M."/>
            <person name="Teasdale R.D."/>
            <person name="Liu E.T."/>
            <person name="Brusic V."/>
            <person name="Quackenbush J."/>
            <person name="Wahlestedt C."/>
            <person name="Mattick J.S."/>
            <person name="Hume D.A."/>
            <person name="Kai C."/>
            <person name="Sasaki D."/>
            <person name="Tomaru Y."/>
            <person name="Fukuda S."/>
            <person name="Kanamori-Katayama M."/>
            <person name="Suzuki M."/>
            <person name="Aoki J."/>
            <person name="Arakawa T."/>
            <person name="Iida J."/>
            <person name="Imamura K."/>
            <person name="Itoh M."/>
            <person name="Kato T."/>
            <person name="Kawaji H."/>
            <person name="Kawagashira N."/>
            <person name="Kawashima T."/>
            <person name="Kojima M."/>
            <person name="Kondo S."/>
            <person name="Konno H."/>
            <person name="Nakano K."/>
            <person name="Ninomiya N."/>
            <person name="Nishio T."/>
            <person name="Okada M."/>
            <person name="Plessy C."/>
            <person name="Shibata K."/>
            <person name="Shiraki T."/>
            <person name="Suzuki S."/>
            <person name="Tagami M."/>
            <person name="Waki K."/>
            <person name="Watahiki A."/>
            <person name="Okamura-Oho Y."/>
            <person name="Suzuki H."/>
            <person name="Kawai J."/>
            <person name="Hayashizaki Y."/>
        </authorList>
    </citation>
    <scope>NUCLEOTIDE SEQUENCE [LARGE SCALE MRNA]</scope>
    <source>
        <strain>C57BL/6J</strain>
        <tissue>Testis</tissue>
    </source>
</reference>
<reference key="2">
    <citation type="journal article" date="2004" name="Genome Res.">
        <title>The status, quality, and expansion of the NIH full-length cDNA project: the Mammalian Gene Collection (MGC).</title>
        <authorList>
            <consortium name="The MGC Project Team"/>
        </authorList>
    </citation>
    <scope>NUCLEOTIDE SEQUENCE [LARGE SCALE MRNA]</scope>
    <source>
        <tissue>Brain</tissue>
    </source>
</reference>